<evidence type="ECO:0000255" key="1">
    <source>
        <dbReference type="HAMAP-Rule" id="MF_00605"/>
    </source>
</evidence>
<gene>
    <name evidence="1" type="primary">trmD</name>
    <name type="ordered locus">CBU_0443</name>
</gene>
<proteinExistence type="inferred from homology"/>
<name>TRMD_COXBU</name>
<keyword id="KW-0963">Cytoplasm</keyword>
<keyword id="KW-0489">Methyltransferase</keyword>
<keyword id="KW-1185">Reference proteome</keyword>
<keyword id="KW-0949">S-adenosyl-L-methionine</keyword>
<keyword id="KW-0808">Transferase</keyword>
<keyword id="KW-0819">tRNA processing</keyword>
<protein>
    <recommendedName>
        <fullName evidence="1">tRNA (guanine-N(1)-)-methyltransferase</fullName>
        <ecNumber evidence="1">2.1.1.228</ecNumber>
    </recommendedName>
    <alternativeName>
        <fullName evidence="1">M1G-methyltransferase</fullName>
    </alternativeName>
    <alternativeName>
        <fullName evidence="1">tRNA [GM37] methyltransferase</fullName>
    </alternativeName>
</protein>
<feature type="chain" id="PRO_0000060367" description="tRNA (guanine-N(1)-)-methyltransferase">
    <location>
        <begin position="1"/>
        <end position="246"/>
    </location>
</feature>
<feature type="binding site" evidence="1">
    <location>
        <position position="114"/>
    </location>
    <ligand>
        <name>S-adenosyl-L-methionine</name>
        <dbReference type="ChEBI" id="CHEBI:59789"/>
    </ligand>
</feature>
<feature type="binding site" evidence="1">
    <location>
        <begin position="134"/>
        <end position="139"/>
    </location>
    <ligand>
        <name>S-adenosyl-L-methionine</name>
        <dbReference type="ChEBI" id="CHEBI:59789"/>
    </ligand>
</feature>
<dbReference type="EC" id="2.1.1.228" evidence="1"/>
<dbReference type="EMBL" id="AE016828">
    <property type="protein sequence ID" value="AAO89994.1"/>
    <property type="molecule type" value="Genomic_DNA"/>
</dbReference>
<dbReference type="RefSeq" id="NP_819480.1">
    <property type="nucleotide sequence ID" value="NC_002971.4"/>
</dbReference>
<dbReference type="RefSeq" id="WP_010957578.1">
    <property type="nucleotide sequence ID" value="NC_002971.4"/>
</dbReference>
<dbReference type="SMR" id="Q820X1"/>
<dbReference type="STRING" id="227377.CBU_0443"/>
<dbReference type="DNASU" id="1208327"/>
<dbReference type="EnsemblBacteria" id="AAO89994">
    <property type="protein sequence ID" value="AAO89994"/>
    <property type="gene ID" value="CBU_0443"/>
</dbReference>
<dbReference type="GeneID" id="1208327"/>
<dbReference type="KEGG" id="cbu:CBU_0443"/>
<dbReference type="PATRIC" id="fig|227377.7.peg.434"/>
<dbReference type="eggNOG" id="COG0336">
    <property type="taxonomic scope" value="Bacteria"/>
</dbReference>
<dbReference type="HOGENOM" id="CLU_047363_0_1_6"/>
<dbReference type="OrthoDB" id="9807416at2"/>
<dbReference type="Proteomes" id="UP000002671">
    <property type="component" value="Chromosome"/>
</dbReference>
<dbReference type="GO" id="GO:0005829">
    <property type="term" value="C:cytosol"/>
    <property type="evidence" value="ECO:0000318"/>
    <property type="project" value="GO_Central"/>
</dbReference>
<dbReference type="GO" id="GO:0052906">
    <property type="term" value="F:tRNA (guanine(37)-N1)-methyltransferase activity"/>
    <property type="evidence" value="ECO:0000318"/>
    <property type="project" value="GO_Central"/>
</dbReference>
<dbReference type="GO" id="GO:0002939">
    <property type="term" value="P:tRNA N1-guanine methylation"/>
    <property type="evidence" value="ECO:0000318"/>
    <property type="project" value="GO_Central"/>
</dbReference>
<dbReference type="CDD" id="cd18080">
    <property type="entry name" value="TrmD-like"/>
    <property type="match status" value="1"/>
</dbReference>
<dbReference type="FunFam" id="1.10.1270.20:FF:000001">
    <property type="entry name" value="tRNA (guanine-N(1)-)-methyltransferase"/>
    <property type="match status" value="1"/>
</dbReference>
<dbReference type="FunFam" id="3.40.1280.10:FF:000001">
    <property type="entry name" value="tRNA (guanine-N(1)-)-methyltransferase"/>
    <property type="match status" value="1"/>
</dbReference>
<dbReference type="Gene3D" id="3.40.1280.10">
    <property type="match status" value="1"/>
</dbReference>
<dbReference type="Gene3D" id="1.10.1270.20">
    <property type="entry name" value="tRNA(m1g37)methyltransferase, domain 2"/>
    <property type="match status" value="1"/>
</dbReference>
<dbReference type="HAMAP" id="MF_00605">
    <property type="entry name" value="TrmD"/>
    <property type="match status" value="1"/>
</dbReference>
<dbReference type="InterPro" id="IPR029028">
    <property type="entry name" value="Alpha/beta_knot_MTases"/>
</dbReference>
<dbReference type="InterPro" id="IPR023148">
    <property type="entry name" value="tRNA_m1G_MeTrfase_C_sf"/>
</dbReference>
<dbReference type="InterPro" id="IPR002649">
    <property type="entry name" value="tRNA_m1G_MeTrfase_TrmD"/>
</dbReference>
<dbReference type="InterPro" id="IPR029026">
    <property type="entry name" value="tRNA_m1G_MTases_N"/>
</dbReference>
<dbReference type="InterPro" id="IPR016009">
    <property type="entry name" value="tRNA_MeTrfase_TRMD/TRM10"/>
</dbReference>
<dbReference type="NCBIfam" id="NF000648">
    <property type="entry name" value="PRK00026.1"/>
    <property type="match status" value="1"/>
</dbReference>
<dbReference type="NCBIfam" id="TIGR00088">
    <property type="entry name" value="trmD"/>
    <property type="match status" value="1"/>
</dbReference>
<dbReference type="PANTHER" id="PTHR46417">
    <property type="entry name" value="TRNA (GUANINE-N(1)-)-METHYLTRANSFERASE"/>
    <property type="match status" value="1"/>
</dbReference>
<dbReference type="PANTHER" id="PTHR46417:SF1">
    <property type="entry name" value="TRNA (GUANINE-N(1)-)-METHYLTRANSFERASE"/>
    <property type="match status" value="1"/>
</dbReference>
<dbReference type="Pfam" id="PF01746">
    <property type="entry name" value="tRNA_m1G_MT"/>
    <property type="match status" value="1"/>
</dbReference>
<dbReference type="PIRSF" id="PIRSF000386">
    <property type="entry name" value="tRNA_mtase"/>
    <property type="match status" value="1"/>
</dbReference>
<dbReference type="SUPFAM" id="SSF75217">
    <property type="entry name" value="alpha/beta knot"/>
    <property type="match status" value="1"/>
</dbReference>
<sequence>MKLIIGVITLFPQMFDALKSGVIGRALKQDRLTLSCWNPRDYATDPHRTVDDRPYGGGPGMVMKFEPLALALKAAKAQLGENTKVIHLTPQGKLLTQAIVREKIHASPLILLAGRYEGIDERLIEAEVDEEWSIGDYILSGGELPAMVLIDAMTRLLPGVLGHKDSASQDSFTAGLLDYPHYTRPEKIADRPVPSVLLSGDHEAISRWRLKQSLGRTWQRRQDLIKRRSLSENEQRLLDEFFEESS</sequence>
<organism>
    <name type="scientific">Coxiella burnetii (strain RSA 493 / Nine Mile phase I)</name>
    <dbReference type="NCBI Taxonomy" id="227377"/>
    <lineage>
        <taxon>Bacteria</taxon>
        <taxon>Pseudomonadati</taxon>
        <taxon>Pseudomonadota</taxon>
        <taxon>Gammaproteobacteria</taxon>
        <taxon>Legionellales</taxon>
        <taxon>Coxiellaceae</taxon>
        <taxon>Coxiella</taxon>
    </lineage>
</organism>
<comment type="function">
    <text evidence="1">Specifically methylates guanosine-37 in various tRNAs.</text>
</comment>
<comment type="catalytic activity">
    <reaction evidence="1">
        <text>guanosine(37) in tRNA + S-adenosyl-L-methionine = N(1)-methylguanosine(37) in tRNA + S-adenosyl-L-homocysteine + H(+)</text>
        <dbReference type="Rhea" id="RHEA:36899"/>
        <dbReference type="Rhea" id="RHEA-COMP:10145"/>
        <dbReference type="Rhea" id="RHEA-COMP:10147"/>
        <dbReference type="ChEBI" id="CHEBI:15378"/>
        <dbReference type="ChEBI" id="CHEBI:57856"/>
        <dbReference type="ChEBI" id="CHEBI:59789"/>
        <dbReference type="ChEBI" id="CHEBI:73542"/>
        <dbReference type="ChEBI" id="CHEBI:74269"/>
        <dbReference type="EC" id="2.1.1.228"/>
    </reaction>
</comment>
<comment type="subunit">
    <text evidence="1">Homodimer.</text>
</comment>
<comment type="subcellular location">
    <subcellularLocation>
        <location evidence="1">Cytoplasm</location>
    </subcellularLocation>
</comment>
<comment type="similarity">
    <text evidence="1">Belongs to the RNA methyltransferase TrmD family.</text>
</comment>
<reference key="1">
    <citation type="journal article" date="2003" name="Proc. Natl. Acad. Sci. U.S.A.">
        <title>Complete genome sequence of the Q-fever pathogen, Coxiella burnetii.</title>
        <authorList>
            <person name="Seshadri R."/>
            <person name="Paulsen I.T."/>
            <person name="Eisen J.A."/>
            <person name="Read T.D."/>
            <person name="Nelson K.E."/>
            <person name="Nelson W.C."/>
            <person name="Ward N.L."/>
            <person name="Tettelin H."/>
            <person name="Davidsen T.M."/>
            <person name="Beanan M.J."/>
            <person name="DeBoy R.T."/>
            <person name="Daugherty S.C."/>
            <person name="Brinkac L.M."/>
            <person name="Madupu R."/>
            <person name="Dodson R.J."/>
            <person name="Khouri H.M."/>
            <person name="Lee K.H."/>
            <person name="Carty H.A."/>
            <person name="Scanlan D."/>
            <person name="Heinzen R.A."/>
            <person name="Thompson H.A."/>
            <person name="Samuel J.E."/>
            <person name="Fraser C.M."/>
            <person name="Heidelberg J.F."/>
        </authorList>
    </citation>
    <scope>NUCLEOTIDE SEQUENCE [LARGE SCALE GENOMIC DNA]</scope>
    <source>
        <strain>RSA 493 / Nine Mile phase I</strain>
    </source>
</reference>
<accession>Q820X1</accession>